<organism>
    <name type="scientific">Zymoseptoria tritici (strain CBS 115943 / IPO323)</name>
    <name type="common">Speckled leaf blotch fungus</name>
    <name type="synonym">Septoria tritici</name>
    <dbReference type="NCBI Taxonomy" id="336722"/>
    <lineage>
        <taxon>Eukaryota</taxon>
        <taxon>Fungi</taxon>
        <taxon>Dikarya</taxon>
        <taxon>Ascomycota</taxon>
        <taxon>Pezizomycotina</taxon>
        <taxon>Dothideomycetes</taxon>
        <taxon>Dothideomycetidae</taxon>
        <taxon>Mycosphaerellales</taxon>
        <taxon>Mycosphaerellaceae</taxon>
        <taxon>Zymoseptoria</taxon>
    </lineage>
</organism>
<evidence type="ECO:0000255" key="1"/>
<evidence type="ECO:0000255" key="2">
    <source>
        <dbReference type="PROSITE-ProRule" id="PRU00498"/>
    </source>
</evidence>
<evidence type="ECO:0000255" key="3">
    <source>
        <dbReference type="PROSITE-ProRule" id="PRU01118"/>
    </source>
</evidence>
<evidence type="ECO:0000269" key="4">
    <source>
    </source>
</evidence>
<evidence type="ECO:0000269" key="5">
    <source>
    </source>
</evidence>
<evidence type="ECO:0000303" key="6">
    <source>
    </source>
</evidence>
<evidence type="ECO:0000303" key="7">
    <source>
    </source>
</evidence>
<evidence type="ECO:0000305" key="8"/>
<feature type="signal peptide" evidence="1">
    <location>
        <begin position="1"/>
        <end position="16"/>
    </location>
</feature>
<feature type="chain" id="PRO_5003395576" description="Secreted LysM effector Mg3LysM">
    <location>
        <begin position="17"/>
        <end position="232"/>
    </location>
</feature>
<feature type="domain" description="LysM 1" evidence="3">
    <location>
        <begin position="47"/>
        <end position="91"/>
    </location>
</feature>
<feature type="domain" description="LysM 2" evidence="3">
    <location>
        <begin position="120"/>
        <end position="165"/>
    </location>
</feature>
<feature type="domain" description="LysM 3" evidence="3">
    <location>
        <begin position="177"/>
        <end position="221"/>
    </location>
</feature>
<feature type="glycosylation site" description="N-linked (GlcNAc...) asparagine" evidence="2">
    <location>
        <position position="48"/>
    </location>
</feature>
<feature type="glycosylation site" description="N-linked (GlcNAc...) asparagine" evidence="2">
    <location>
        <position position="100"/>
    </location>
</feature>
<feature type="glycosylation site" description="N-linked (GlcNAc...) asparagine" evidence="2">
    <location>
        <position position="138"/>
    </location>
</feature>
<feature type="glycosylation site" description="N-linked (GlcNAc...) asparagine" evidence="2">
    <location>
        <position position="195"/>
    </location>
</feature>
<feature type="glycosylation site" description="N-linked (GlcNAc...) asparagine" evidence="2">
    <location>
        <position position="209"/>
    </location>
</feature>
<feature type="glycosylation site" description="N-linked (GlcNAc...) asparagine" evidence="2">
    <location>
        <position position="227"/>
    </location>
</feature>
<keyword id="KW-0325">Glycoprotein</keyword>
<keyword id="KW-1185">Reference proteome</keyword>
<keyword id="KW-0677">Repeat</keyword>
<keyword id="KW-0732">Signal</keyword>
<keyword id="KW-0843">Virulence</keyword>
<sequence>MQNIFLAATLLGAAFAAPQNPPTSCSAAPQPTGTGSPGTVCGSTTFTNYTVKAGDTLGAIAKQYNSGVCDIAKVNGIDNPDYIKPDQVLSIPANCVTPDNTSCVKPVPVITNTCVLGVGSTYTVKSGDSFSAIATSFNITLASLEARNPQIPNYDLIFPGQVINTPLCPNSVCDSIGTYVIESGDIFYNLAQSNNVTVGQLESLNVNVNVTDIHPGDIIILPHNCHNITASA</sequence>
<gene>
    <name evidence="7" type="primary">Mg3LysM</name>
    <name type="ORF">MYCGRDRAFT_111221</name>
</gene>
<protein>
    <recommendedName>
        <fullName evidence="6">Secreted LysM effector Mg3LysM</fullName>
    </recommendedName>
    <alternativeName>
        <fullName evidence="6">LysM domain-containing protein Mg3LysM</fullName>
    </alternativeName>
    <alternativeName>
        <fullName evidence="6">Three LysM domain-containing protein</fullName>
    </alternativeName>
</protein>
<dbReference type="EMBL" id="CM001206">
    <property type="protein sequence ID" value="EGP83639.1"/>
    <property type="molecule type" value="Genomic_DNA"/>
</dbReference>
<dbReference type="RefSeq" id="XP_003848663.1">
    <property type="nucleotide sequence ID" value="XM_003848615.1"/>
</dbReference>
<dbReference type="SMR" id="F9XMT4"/>
<dbReference type="EnsemblFungi" id="Mycgr3T111221">
    <property type="protein sequence ID" value="Mycgr3P111221"/>
    <property type="gene ID" value="Mycgr3G111221"/>
</dbReference>
<dbReference type="GeneID" id="13396123"/>
<dbReference type="KEGG" id="ztr:MYCGRDRAFT_111221"/>
<dbReference type="VEuPathDB" id="FungiDB:ZTRI_11.155"/>
<dbReference type="eggNOG" id="ENOG502SCJ7">
    <property type="taxonomic scope" value="Eukaryota"/>
</dbReference>
<dbReference type="HOGENOM" id="CLU_076125_0_0_1"/>
<dbReference type="InParanoid" id="F9XMT4"/>
<dbReference type="OMA" id="CTMADFT"/>
<dbReference type="OrthoDB" id="2107166at2759"/>
<dbReference type="PHI-base" id="PHI:11368"/>
<dbReference type="PHI-base" id="PHI:6494"/>
<dbReference type="Proteomes" id="UP000008062">
    <property type="component" value="Chromosome 11"/>
</dbReference>
<dbReference type="GO" id="GO:0140593">
    <property type="term" value="C:host apoplast"/>
    <property type="evidence" value="ECO:0000304"/>
    <property type="project" value="PHI-base"/>
</dbReference>
<dbReference type="GO" id="GO:0043656">
    <property type="term" value="C:host intracellular region"/>
    <property type="evidence" value="ECO:0000269"/>
    <property type="project" value="PHI-base"/>
</dbReference>
<dbReference type="GO" id="GO:0008061">
    <property type="term" value="F:chitin binding"/>
    <property type="evidence" value="ECO:0000314"/>
    <property type="project" value="PHI-base"/>
</dbReference>
<dbReference type="GO" id="GO:0008932">
    <property type="term" value="F:lytic endotransglycosylase activity"/>
    <property type="evidence" value="ECO:0007669"/>
    <property type="project" value="TreeGrafter"/>
</dbReference>
<dbReference type="GO" id="GO:0140320">
    <property type="term" value="F:PAMP receptor decoy activity"/>
    <property type="evidence" value="ECO:0000314"/>
    <property type="project" value="PHI-base"/>
</dbReference>
<dbReference type="GO" id="GO:0052034">
    <property type="term" value="P:effector-mediated suppression of host pattern-triggered immunity"/>
    <property type="evidence" value="ECO:0000314"/>
    <property type="project" value="PHI-base"/>
</dbReference>
<dbReference type="GO" id="GO:0140423">
    <property type="term" value="P:effector-mediated suppression of host pattern-triggered immunity signaling"/>
    <property type="evidence" value="ECO:0000269"/>
    <property type="project" value="PHI-base"/>
</dbReference>
<dbReference type="CDD" id="cd00118">
    <property type="entry name" value="LysM"/>
    <property type="match status" value="2"/>
</dbReference>
<dbReference type="Gene3D" id="3.10.350.10">
    <property type="entry name" value="LysM domain"/>
    <property type="match status" value="3"/>
</dbReference>
<dbReference type="InterPro" id="IPR018392">
    <property type="entry name" value="LysM_dom"/>
</dbReference>
<dbReference type="InterPro" id="IPR036779">
    <property type="entry name" value="LysM_dom_sf"/>
</dbReference>
<dbReference type="PANTHER" id="PTHR33734">
    <property type="entry name" value="LYSM DOMAIN-CONTAINING GPI-ANCHORED PROTEIN 2"/>
    <property type="match status" value="1"/>
</dbReference>
<dbReference type="PANTHER" id="PTHR33734:SF22">
    <property type="entry name" value="MEMBRANE-BOUND LYTIC MUREIN TRANSGLYCOSYLASE D"/>
    <property type="match status" value="1"/>
</dbReference>
<dbReference type="Pfam" id="PF01476">
    <property type="entry name" value="LysM"/>
    <property type="match status" value="3"/>
</dbReference>
<dbReference type="SMART" id="SM00257">
    <property type="entry name" value="LysM"/>
    <property type="match status" value="3"/>
</dbReference>
<dbReference type="SUPFAM" id="SSF54106">
    <property type="entry name" value="LysM domain"/>
    <property type="match status" value="3"/>
</dbReference>
<dbReference type="PROSITE" id="PS51782">
    <property type="entry name" value="LYSM"/>
    <property type="match status" value="3"/>
</dbReference>
<name>LYSM3_ZYMTI</name>
<proteinExistence type="evidence at transcript level"/>
<reference key="1">
    <citation type="journal article" date="2011" name="PLoS Genet.">
        <title>Finished genome of the fungal wheat pathogen Mycosphaerella graminicola reveals dispensome structure, chromosome plasticity, and stealth pathogenesis.</title>
        <authorList>
            <person name="Goodwin S.B."/>
            <person name="Ben M'barek S."/>
            <person name="Dhillon B."/>
            <person name="Wittenberg A.H.J."/>
            <person name="Crane C.F."/>
            <person name="Hane J.K."/>
            <person name="Foster A.J."/>
            <person name="Van der Lee T.A.J."/>
            <person name="Grimwood J."/>
            <person name="Aerts A."/>
            <person name="Antoniw J."/>
            <person name="Bailey A."/>
            <person name="Bluhm B."/>
            <person name="Bowler J."/>
            <person name="Bristow J."/>
            <person name="van der Burgt A."/>
            <person name="Canto-Canche B."/>
            <person name="Churchill A.C.L."/>
            <person name="Conde-Ferraez L."/>
            <person name="Cools H.J."/>
            <person name="Coutinho P.M."/>
            <person name="Csukai M."/>
            <person name="Dehal P."/>
            <person name="De Wit P."/>
            <person name="Donzelli B."/>
            <person name="van de Geest H.C."/>
            <person name="van Ham R.C.H.J."/>
            <person name="Hammond-Kosack K.E."/>
            <person name="Henrissat B."/>
            <person name="Kilian A."/>
            <person name="Kobayashi A.K."/>
            <person name="Koopmann E."/>
            <person name="Kourmpetis Y."/>
            <person name="Kuzniar A."/>
            <person name="Lindquist E."/>
            <person name="Lombard V."/>
            <person name="Maliepaard C."/>
            <person name="Martins N."/>
            <person name="Mehrabi R."/>
            <person name="Nap J.P.H."/>
            <person name="Ponomarenko A."/>
            <person name="Rudd J.J."/>
            <person name="Salamov A."/>
            <person name="Schmutz J."/>
            <person name="Schouten H.J."/>
            <person name="Shapiro H."/>
            <person name="Stergiopoulos I."/>
            <person name="Torriani S.F.F."/>
            <person name="Tu H."/>
            <person name="de Vries R.P."/>
            <person name="Waalwijk C."/>
            <person name="Ware S.B."/>
            <person name="Wiebenga A."/>
            <person name="Zwiers L.-H."/>
            <person name="Oliver R.P."/>
            <person name="Grigoriev I.V."/>
            <person name="Kema G.H.J."/>
        </authorList>
    </citation>
    <scope>NUCLEOTIDE SEQUENCE [LARGE SCALE GENOMIC DNA]</scope>
    <source>
        <strain>CBS 115943 / IPO323</strain>
    </source>
</reference>
<reference key="2">
    <citation type="journal article" date="2011" name="Plant Physiol.">
        <title>Analysis of two in planta expressed LysM effector homologs from the fungus Mycosphaerella graminicola reveals novel functional properties and varying contributions to virulence on wheat.</title>
        <authorList>
            <person name="Marshall R."/>
            <person name="Kombrink A."/>
            <person name="Motteram J."/>
            <person name="Loza-Reyes E."/>
            <person name="Lucas J."/>
            <person name="Hammond-Kosack K.E."/>
            <person name="Thomma B.P."/>
            <person name="Rudd J.J."/>
        </authorList>
    </citation>
    <scope>FUNCTION</scope>
    <scope>INDUCTION</scope>
    <scope>DISRUPTION PHENOTYPE</scope>
    <scope>DOMAIN</scope>
    <source>
        <strain>CBS 115943 / IPO323</strain>
    </source>
</reference>
<reference key="3">
    <citation type="journal article" date="2021" name="Mol. Plant Pathol.">
        <title>Three LysM effectors of Zymoseptoria tritici collectively disarm chitin-triggered plant immunity.</title>
        <authorList>
            <person name="Tian H."/>
            <person name="MacKenzie C.I."/>
            <person name="Rodriguez-Moreno L."/>
            <person name="van den Berg G.C.M."/>
            <person name="Chen H."/>
            <person name="Rudd J.J."/>
            <person name="Mesters J.R."/>
            <person name="Thomma B.P.H.J."/>
        </authorList>
    </citation>
    <scope>FUNCTION</scope>
    <scope>DISRUPTION PHENOTYPE</scope>
    <source>
        <strain>CBS 115943 / IPO323</strain>
    </source>
</reference>
<comment type="function">
    <text evidence="4 5">Secreted effector that enables the plant pathogenic fungus to manipulate host defenses for successful infection (PubMed:21467214, PubMed:33797163). Binds chitin fragments and blocks the activation of chitin-induced plant defense responses (PubMed:21467214). Protects fungal hyphae against hydrolytic plant enzymes (PubMed:21467214).</text>
</comment>
<comment type="induction">
    <text evidence="4">Expression is up-regulated during wheat leaf infection.</text>
</comment>
<comment type="domain">
    <text evidence="4">The LysM (lysin motif) domains are small globular domains involved in binding chitin in eukaryotes. Mg3LysM contains 3 LysM domains.</text>
</comment>
<comment type="disruption phenotype">
    <text evidence="4 5">Severely compromises virulence toward wheat leaves (PubMed:21467214). Produces no to only a few pycnidia (PubMed:33797163).</text>
</comment>
<comment type="miscellaneous">
    <text evidence="8">In plants, chitin acts as a microbe-associated molecular pattern (MAMP) that is recognized by lysin motif (LysM)-containing plant cell surface-localized pattern recognition receptors (PRRs) that activate a plethora of downstream immune responses.</text>
</comment>
<comment type="similarity">
    <text evidence="8">Belongs to the secreted LysM effector family.</text>
</comment>
<accession>F9XMT4</accession>